<keyword id="KW-0028">Amino-acid biosynthesis</keyword>
<keyword id="KW-0055">Arginine biosynthesis</keyword>
<keyword id="KW-0067">ATP-binding</keyword>
<keyword id="KW-0436">Ligase</keyword>
<keyword id="KW-0460">Magnesium</keyword>
<keyword id="KW-0464">Manganese</keyword>
<keyword id="KW-0479">Metal-binding</keyword>
<keyword id="KW-0547">Nucleotide-binding</keyword>
<keyword id="KW-0665">Pyrimidine biosynthesis</keyword>
<keyword id="KW-1185">Reference proteome</keyword>
<keyword id="KW-0677">Repeat</keyword>
<organism>
    <name type="scientific">Hyperthermus butylicus (strain DSM 5456 / JCM 9403 / PLM1-5)</name>
    <dbReference type="NCBI Taxonomy" id="415426"/>
    <lineage>
        <taxon>Archaea</taxon>
        <taxon>Thermoproteota</taxon>
        <taxon>Thermoprotei</taxon>
        <taxon>Desulfurococcales</taxon>
        <taxon>Pyrodictiaceae</taxon>
        <taxon>Hyperthermus</taxon>
    </lineage>
</organism>
<evidence type="ECO:0000255" key="1">
    <source>
        <dbReference type="HAMAP-Rule" id="MF_01210"/>
    </source>
</evidence>
<proteinExistence type="inferred from homology"/>
<feature type="chain" id="PRO_1000066351" description="Carbamoyl phosphate synthase large chain">
    <location>
        <begin position="1"/>
        <end position="1073"/>
    </location>
</feature>
<feature type="domain" description="ATP-grasp 1" evidence="1">
    <location>
        <begin position="133"/>
        <end position="328"/>
    </location>
</feature>
<feature type="domain" description="ATP-grasp 2" evidence="1">
    <location>
        <begin position="681"/>
        <end position="871"/>
    </location>
</feature>
<feature type="domain" description="MGS-like" evidence="1">
    <location>
        <begin position="944"/>
        <end position="1073"/>
    </location>
</feature>
<feature type="region of interest" description="Carboxyphosphate synthetic domain" evidence="1">
    <location>
        <begin position="1"/>
        <end position="402"/>
    </location>
</feature>
<feature type="region of interest" description="Oligomerization domain" evidence="1">
    <location>
        <begin position="403"/>
        <end position="555"/>
    </location>
</feature>
<feature type="region of interest" description="Carbamoyl phosphate synthetic domain" evidence="1">
    <location>
        <begin position="556"/>
        <end position="944"/>
    </location>
</feature>
<feature type="region of interest" description="Allosteric domain" evidence="1">
    <location>
        <begin position="945"/>
        <end position="1073"/>
    </location>
</feature>
<feature type="binding site" evidence="1">
    <location>
        <position position="129"/>
    </location>
    <ligand>
        <name>ATP</name>
        <dbReference type="ChEBI" id="CHEBI:30616"/>
        <label>1</label>
    </ligand>
</feature>
<feature type="binding site" evidence="1">
    <location>
        <position position="169"/>
    </location>
    <ligand>
        <name>ATP</name>
        <dbReference type="ChEBI" id="CHEBI:30616"/>
        <label>1</label>
    </ligand>
</feature>
<feature type="binding site" evidence="1">
    <location>
        <position position="175"/>
    </location>
    <ligand>
        <name>ATP</name>
        <dbReference type="ChEBI" id="CHEBI:30616"/>
        <label>1</label>
    </ligand>
</feature>
<feature type="binding site" evidence="1">
    <location>
        <position position="176"/>
    </location>
    <ligand>
        <name>ATP</name>
        <dbReference type="ChEBI" id="CHEBI:30616"/>
        <label>1</label>
    </ligand>
</feature>
<feature type="binding site" evidence="1">
    <location>
        <position position="208"/>
    </location>
    <ligand>
        <name>ATP</name>
        <dbReference type="ChEBI" id="CHEBI:30616"/>
        <label>1</label>
    </ligand>
</feature>
<feature type="binding site" evidence="1">
    <location>
        <position position="210"/>
    </location>
    <ligand>
        <name>ATP</name>
        <dbReference type="ChEBI" id="CHEBI:30616"/>
        <label>1</label>
    </ligand>
</feature>
<feature type="binding site" evidence="1">
    <location>
        <position position="215"/>
    </location>
    <ligand>
        <name>ATP</name>
        <dbReference type="ChEBI" id="CHEBI:30616"/>
        <label>1</label>
    </ligand>
</feature>
<feature type="binding site" evidence="1">
    <location>
        <position position="241"/>
    </location>
    <ligand>
        <name>ATP</name>
        <dbReference type="ChEBI" id="CHEBI:30616"/>
        <label>1</label>
    </ligand>
</feature>
<feature type="binding site" evidence="1">
    <location>
        <position position="242"/>
    </location>
    <ligand>
        <name>ATP</name>
        <dbReference type="ChEBI" id="CHEBI:30616"/>
        <label>1</label>
    </ligand>
</feature>
<feature type="binding site" evidence="1">
    <location>
        <position position="243"/>
    </location>
    <ligand>
        <name>ATP</name>
        <dbReference type="ChEBI" id="CHEBI:30616"/>
        <label>1</label>
    </ligand>
</feature>
<feature type="binding site" evidence="1">
    <location>
        <position position="284"/>
    </location>
    <ligand>
        <name>ATP</name>
        <dbReference type="ChEBI" id="CHEBI:30616"/>
        <label>1</label>
    </ligand>
</feature>
<feature type="binding site" evidence="1">
    <location>
        <position position="284"/>
    </location>
    <ligand>
        <name>Mg(2+)</name>
        <dbReference type="ChEBI" id="CHEBI:18420"/>
        <label>1</label>
    </ligand>
</feature>
<feature type="binding site" evidence="1">
    <location>
        <position position="284"/>
    </location>
    <ligand>
        <name>Mn(2+)</name>
        <dbReference type="ChEBI" id="CHEBI:29035"/>
        <label>1</label>
    </ligand>
</feature>
<feature type="binding site" evidence="1">
    <location>
        <position position="299"/>
    </location>
    <ligand>
        <name>ATP</name>
        <dbReference type="ChEBI" id="CHEBI:30616"/>
        <label>1</label>
    </ligand>
</feature>
<feature type="binding site" evidence="1">
    <location>
        <position position="299"/>
    </location>
    <ligand>
        <name>Mg(2+)</name>
        <dbReference type="ChEBI" id="CHEBI:18420"/>
        <label>1</label>
    </ligand>
</feature>
<feature type="binding site" evidence="1">
    <location>
        <position position="299"/>
    </location>
    <ligand>
        <name>Mg(2+)</name>
        <dbReference type="ChEBI" id="CHEBI:18420"/>
        <label>2</label>
    </ligand>
</feature>
<feature type="binding site" evidence="1">
    <location>
        <position position="299"/>
    </location>
    <ligand>
        <name>Mn(2+)</name>
        <dbReference type="ChEBI" id="CHEBI:29035"/>
        <label>1</label>
    </ligand>
</feature>
<feature type="binding site" evidence="1">
    <location>
        <position position="299"/>
    </location>
    <ligand>
        <name>Mn(2+)</name>
        <dbReference type="ChEBI" id="CHEBI:29035"/>
        <label>2</label>
    </ligand>
</feature>
<feature type="binding site" evidence="1">
    <location>
        <position position="301"/>
    </location>
    <ligand>
        <name>Mg(2+)</name>
        <dbReference type="ChEBI" id="CHEBI:18420"/>
        <label>2</label>
    </ligand>
</feature>
<feature type="binding site" evidence="1">
    <location>
        <position position="301"/>
    </location>
    <ligand>
        <name>Mn(2+)</name>
        <dbReference type="ChEBI" id="CHEBI:29035"/>
        <label>2</label>
    </ligand>
</feature>
<feature type="binding site" evidence="1">
    <location>
        <position position="717"/>
    </location>
    <ligand>
        <name>ATP</name>
        <dbReference type="ChEBI" id="CHEBI:30616"/>
        <label>2</label>
    </ligand>
</feature>
<feature type="binding site" evidence="1">
    <location>
        <position position="756"/>
    </location>
    <ligand>
        <name>ATP</name>
        <dbReference type="ChEBI" id="CHEBI:30616"/>
        <label>2</label>
    </ligand>
</feature>
<feature type="binding site" evidence="1">
    <location>
        <position position="758"/>
    </location>
    <ligand>
        <name>ATP</name>
        <dbReference type="ChEBI" id="CHEBI:30616"/>
        <label>2</label>
    </ligand>
</feature>
<feature type="binding site" evidence="1">
    <location>
        <position position="763"/>
    </location>
    <ligand>
        <name>ATP</name>
        <dbReference type="ChEBI" id="CHEBI:30616"/>
        <label>2</label>
    </ligand>
</feature>
<feature type="binding site" evidence="1">
    <location>
        <position position="787"/>
    </location>
    <ligand>
        <name>ATP</name>
        <dbReference type="ChEBI" id="CHEBI:30616"/>
        <label>2</label>
    </ligand>
</feature>
<feature type="binding site" evidence="1">
    <location>
        <position position="788"/>
    </location>
    <ligand>
        <name>ATP</name>
        <dbReference type="ChEBI" id="CHEBI:30616"/>
        <label>2</label>
    </ligand>
</feature>
<feature type="binding site" evidence="1">
    <location>
        <position position="789"/>
    </location>
    <ligand>
        <name>ATP</name>
        <dbReference type="ChEBI" id="CHEBI:30616"/>
        <label>2</label>
    </ligand>
</feature>
<feature type="binding site" evidence="1">
    <location>
        <position position="790"/>
    </location>
    <ligand>
        <name>ATP</name>
        <dbReference type="ChEBI" id="CHEBI:30616"/>
        <label>2</label>
    </ligand>
</feature>
<feature type="binding site" evidence="1">
    <location>
        <position position="830"/>
    </location>
    <ligand>
        <name>ATP</name>
        <dbReference type="ChEBI" id="CHEBI:30616"/>
        <label>2</label>
    </ligand>
</feature>
<feature type="binding site" evidence="1">
    <location>
        <position position="830"/>
    </location>
    <ligand>
        <name>Mg(2+)</name>
        <dbReference type="ChEBI" id="CHEBI:18420"/>
        <label>3</label>
    </ligand>
</feature>
<feature type="binding site" evidence="1">
    <location>
        <position position="830"/>
    </location>
    <ligand>
        <name>Mn(2+)</name>
        <dbReference type="ChEBI" id="CHEBI:29035"/>
        <label>3</label>
    </ligand>
</feature>
<feature type="binding site" evidence="1">
    <location>
        <position position="842"/>
    </location>
    <ligand>
        <name>ATP</name>
        <dbReference type="ChEBI" id="CHEBI:30616"/>
        <label>2</label>
    </ligand>
</feature>
<feature type="binding site" evidence="1">
    <location>
        <position position="842"/>
    </location>
    <ligand>
        <name>Mg(2+)</name>
        <dbReference type="ChEBI" id="CHEBI:18420"/>
        <label>3</label>
    </ligand>
</feature>
<feature type="binding site" evidence="1">
    <location>
        <position position="842"/>
    </location>
    <ligand>
        <name>Mg(2+)</name>
        <dbReference type="ChEBI" id="CHEBI:18420"/>
        <label>4</label>
    </ligand>
</feature>
<feature type="binding site" evidence="1">
    <location>
        <position position="842"/>
    </location>
    <ligand>
        <name>Mn(2+)</name>
        <dbReference type="ChEBI" id="CHEBI:29035"/>
        <label>3</label>
    </ligand>
</feature>
<feature type="binding site" evidence="1">
    <location>
        <position position="842"/>
    </location>
    <ligand>
        <name>Mn(2+)</name>
        <dbReference type="ChEBI" id="CHEBI:29035"/>
        <label>4</label>
    </ligand>
</feature>
<feature type="binding site" evidence="1">
    <location>
        <position position="844"/>
    </location>
    <ligand>
        <name>Mg(2+)</name>
        <dbReference type="ChEBI" id="CHEBI:18420"/>
        <label>4</label>
    </ligand>
</feature>
<feature type="binding site" evidence="1">
    <location>
        <position position="844"/>
    </location>
    <ligand>
        <name>Mn(2+)</name>
        <dbReference type="ChEBI" id="CHEBI:29035"/>
        <label>4</label>
    </ligand>
</feature>
<gene>
    <name evidence="1" type="primary">carB</name>
    <name type="ordered locus">Hbut_0302</name>
</gene>
<comment type="function">
    <text evidence="1">Large subunit of the glutamine-dependent carbamoyl phosphate synthetase (CPSase). CPSase catalyzes the formation of carbamoyl phosphate from the ammonia moiety of glutamine, carbonate, and phosphate donated by ATP, constituting the first step of 2 biosynthetic pathways, one leading to arginine and/or urea and the other to pyrimidine nucleotides. The large subunit (synthetase) binds the substrates ammonia (free or transferred from glutamine from the small subunit), hydrogencarbonate and ATP and carries out an ATP-coupled ligase reaction, activating hydrogencarbonate by forming carboxy phosphate which reacts with ammonia to form carbamoyl phosphate.</text>
</comment>
<comment type="catalytic activity">
    <reaction evidence="1">
        <text>hydrogencarbonate + L-glutamine + 2 ATP + H2O = carbamoyl phosphate + L-glutamate + 2 ADP + phosphate + 2 H(+)</text>
        <dbReference type="Rhea" id="RHEA:18633"/>
        <dbReference type="ChEBI" id="CHEBI:15377"/>
        <dbReference type="ChEBI" id="CHEBI:15378"/>
        <dbReference type="ChEBI" id="CHEBI:17544"/>
        <dbReference type="ChEBI" id="CHEBI:29985"/>
        <dbReference type="ChEBI" id="CHEBI:30616"/>
        <dbReference type="ChEBI" id="CHEBI:43474"/>
        <dbReference type="ChEBI" id="CHEBI:58228"/>
        <dbReference type="ChEBI" id="CHEBI:58359"/>
        <dbReference type="ChEBI" id="CHEBI:456216"/>
        <dbReference type="EC" id="6.3.5.5"/>
    </reaction>
</comment>
<comment type="catalytic activity">
    <molecule>Carbamoyl phosphate synthase large chain</molecule>
    <reaction evidence="1">
        <text>hydrogencarbonate + NH4(+) + 2 ATP = carbamoyl phosphate + 2 ADP + phosphate + 2 H(+)</text>
        <dbReference type="Rhea" id="RHEA:18029"/>
        <dbReference type="ChEBI" id="CHEBI:15378"/>
        <dbReference type="ChEBI" id="CHEBI:17544"/>
        <dbReference type="ChEBI" id="CHEBI:28938"/>
        <dbReference type="ChEBI" id="CHEBI:30616"/>
        <dbReference type="ChEBI" id="CHEBI:43474"/>
        <dbReference type="ChEBI" id="CHEBI:58228"/>
        <dbReference type="ChEBI" id="CHEBI:456216"/>
        <dbReference type="EC" id="6.3.4.16"/>
    </reaction>
</comment>
<comment type="cofactor">
    <cofactor evidence="1">
        <name>Mg(2+)</name>
        <dbReference type="ChEBI" id="CHEBI:18420"/>
    </cofactor>
    <cofactor evidence="1">
        <name>Mn(2+)</name>
        <dbReference type="ChEBI" id="CHEBI:29035"/>
    </cofactor>
    <text evidence="1">Binds 4 Mg(2+) or Mn(2+) ions per subunit.</text>
</comment>
<comment type="pathway">
    <text evidence="1">Amino-acid biosynthesis; L-arginine biosynthesis; carbamoyl phosphate from bicarbonate: step 1/1.</text>
</comment>
<comment type="pathway">
    <text evidence="1">Pyrimidine metabolism; UMP biosynthesis via de novo pathway; (S)-dihydroorotate from bicarbonate: step 1/3.</text>
</comment>
<comment type="subunit">
    <text evidence="1">Composed of two chains; the small (or glutamine) chain promotes the hydrolysis of glutamine to ammonia, which is used by the large (or ammonia) chain to synthesize carbamoyl phosphate. Tetramer of heterodimers (alpha,beta)4.</text>
</comment>
<comment type="domain">
    <text evidence="1">The large subunit is composed of 2 ATP-grasp domains that are involved in binding the 2 ATP molecules needed for carbamoyl phosphate synthesis. The N-terminal ATP-grasp domain (referred to as the carboxyphosphate synthetic component) catalyzes the ATP-dependent phosphorylation of hydrogencarbonate to carboxyphosphate and the subsequent nucleophilic attack by ammonia to form a carbamate intermediate. The C-terminal ATP-grasp domain (referred to as the carbamoyl phosphate synthetic component) then catalyzes the phosphorylation of carbamate with the second ATP to form the end product carbamoyl phosphate. The reactive and unstable enzyme intermediates are sequentially channeled from one active site to the next through the interior of the protein over a distance of at least 96 A.</text>
</comment>
<comment type="similarity">
    <text evidence="1">Belongs to the CarB family.</text>
</comment>
<name>CARB_HYPBU</name>
<protein>
    <recommendedName>
        <fullName evidence="1">Carbamoyl phosphate synthase large chain</fullName>
        <ecNumber evidence="1">6.3.4.16</ecNumber>
        <ecNumber evidence="1">6.3.5.5</ecNumber>
    </recommendedName>
    <alternativeName>
        <fullName evidence="1">Carbamoyl phosphate synthetase ammonia chain</fullName>
    </alternativeName>
</protein>
<dbReference type="EC" id="6.3.4.16" evidence="1"/>
<dbReference type="EC" id="6.3.5.5" evidence="1"/>
<dbReference type="EMBL" id="CP000493">
    <property type="protein sequence ID" value="ABM80174.1"/>
    <property type="molecule type" value="Genomic_DNA"/>
</dbReference>
<dbReference type="RefSeq" id="WP_011821492.1">
    <property type="nucleotide sequence ID" value="NC_008818.1"/>
</dbReference>
<dbReference type="SMR" id="A2BJL3"/>
<dbReference type="STRING" id="415426.Hbut_0302"/>
<dbReference type="EnsemblBacteria" id="ABM80174">
    <property type="protein sequence ID" value="ABM80174"/>
    <property type="gene ID" value="Hbut_0302"/>
</dbReference>
<dbReference type="GeneID" id="4781404"/>
<dbReference type="KEGG" id="hbu:Hbut_0302"/>
<dbReference type="eggNOG" id="arCOG01594">
    <property type="taxonomic scope" value="Archaea"/>
</dbReference>
<dbReference type="HOGENOM" id="CLU_000513_1_3_2"/>
<dbReference type="OrthoDB" id="85487at2157"/>
<dbReference type="UniPathway" id="UPA00068">
    <property type="reaction ID" value="UER00171"/>
</dbReference>
<dbReference type="UniPathway" id="UPA00070">
    <property type="reaction ID" value="UER00115"/>
</dbReference>
<dbReference type="Proteomes" id="UP000002593">
    <property type="component" value="Chromosome"/>
</dbReference>
<dbReference type="GO" id="GO:0005737">
    <property type="term" value="C:cytoplasm"/>
    <property type="evidence" value="ECO:0007669"/>
    <property type="project" value="TreeGrafter"/>
</dbReference>
<dbReference type="GO" id="GO:0005524">
    <property type="term" value="F:ATP binding"/>
    <property type="evidence" value="ECO:0007669"/>
    <property type="project" value="UniProtKB-UniRule"/>
</dbReference>
<dbReference type="GO" id="GO:0004087">
    <property type="term" value="F:carbamoyl-phosphate synthase (ammonia) activity"/>
    <property type="evidence" value="ECO:0007669"/>
    <property type="project" value="RHEA"/>
</dbReference>
<dbReference type="GO" id="GO:0004088">
    <property type="term" value="F:carbamoyl-phosphate synthase (glutamine-hydrolyzing) activity"/>
    <property type="evidence" value="ECO:0007669"/>
    <property type="project" value="UniProtKB-UniRule"/>
</dbReference>
<dbReference type="GO" id="GO:0046872">
    <property type="term" value="F:metal ion binding"/>
    <property type="evidence" value="ECO:0007669"/>
    <property type="project" value="UniProtKB-KW"/>
</dbReference>
<dbReference type="GO" id="GO:0044205">
    <property type="term" value="P:'de novo' UMP biosynthetic process"/>
    <property type="evidence" value="ECO:0007669"/>
    <property type="project" value="UniProtKB-UniRule"/>
</dbReference>
<dbReference type="GO" id="GO:0006541">
    <property type="term" value="P:glutamine metabolic process"/>
    <property type="evidence" value="ECO:0007669"/>
    <property type="project" value="TreeGrafter"/>
</dbReference>
<dbReference type="GO" id="GO:0006526">
    <property type="term" value="P:L-arginine biosynthetic process"/>
    <property type="evidence" value="ECO:0007669"/>
    <property type="project" value="UniProtKB-UniRule"/>
</dbReference>
<dbReference type="FunFam" id="1.10.1030.10:FF:000002">
    <property type="entry name" value="Carbamoyl-phosphate synthase large chain"/>
    <property type="match status" value="1"/>
</dbReference>
<dbReference type="FunFam" id="3.30.1490.20:FF:000001">
    <property type="entry name" value="Carbamoyl-phosphate synthase large chain"/>
    <property type="match status" value="1"/>
</dbReference>
<dbReference type="FunFam" id="3.30.470.20:FF:000001">
    <property type="entry name" value="Carbamoyl-phosphate synthase large chain"/>
    <property type="match status" value="1"/>
</dbReference>
<dbReference type="FunFam" id="3.30.470.20:FF:000026">
    <property type="entry name" value="Carbamoyl-phosphate synthase large chain"/>
    <property type="match status" value="1"/>
</dbReference>
<dbReference type="FunFam" id="3.40.50.20:FF:000001">
    <property type="entry name" value="Carbamoyl-phosphate synthase large chain"/>
    <property type="match status" value="2"/>
</dbReference>
<dbReference type="Gene3D" id="3.40.50.20">
    <property type="match status" value="2"/>
</dbReference>
<dbReference type="Gene3D" id="3.30.1490.20">
    <property type="entry name" value="ATP-grasp fold, A domain"/>
    <property type="match status" value="1"/>
</dbReference>
<dbReference type="Gene3D" id="3.30.470.20">
    <property type="entry name" value="ATP-grasp fold, B domain"/>
    <property type="match status" value="2"/>
</dbReference>
<dbReference type="Gene3D" id="1.10.1030.10">
    <property type="entry name" value="Carbamoyl-phosphate synthetase, large subunit oligomerisation domain"/>
    <property type="match status" value="1"/>
</dbReference>
<dbReference type="HAMAP" id="MF_01210_A">
    <property type="entry name" value="CPSase_L_chain_A"/>
    <property type="match status" value="1"/>
</dbReference>
<dbReference type="InterPro" id="IPR011761">
    <property type="entry name" value="ATP-grasp"/>
</dbReference>
<dbReference type="InterPro" id="IPR013815">
    <property type="entry name" value="ATP_grasp_subdomain_1"/>
</dbReference>
<dbReference type="InterPro" id="IPR006275">
    <property type="entry name" value="CarbamoylP_synth_lsu"/>
</dbReference>
<dbReference type="InterPro" id="IPR005480">
    <property type="entry name" value="CarbamoylP_synth_lsu_oligo"/>
</dbReference>
<dbReference type="InterPro" id="IPR036897">
    <property type="entry name" value="CarbamoylP_synth_lsu_oligo_sf"/>
</dbReference>
<dbReference type="InterPro" id="IPR005479">
    <property type="entry name" value="CbamoylP_synth_lsu-like_ATP-bd"/>
</dbReference>
<dbReference type="InterPro" id="IPR005483">
    <property type="entry name" value="CbamoylP_synth_lsu_CPSase_dom"/>
</dbReference>
<dbReference type="InterPro" id="IPR011607">
    <property type="entry name" value="MGS-like_dom"/>
</dbReference>
<dbReference type="InterPro" id="IPR016185">
    <property type="entry name" value="PreATP-grasp_dom_sf"/>
</dbReference>
<dbReference type="NCBIfam" id="TIGR01369">
    <property type="entry name" value="CPSaseII_lrg"/>
    <property type="match status" value="1"/>
</dbReference>
<dbReference type="NCBIfam" id="NF003671">
    <property type="entry name" value="PRK05294.1"/>
    <property type="match status" value="1"/>
</dbReference>
<dbReference type="NCBIfam" id="NF009455">
    <property type="entry name" value="PRK12815.1"/>
    <property type="match status" value="1"/>
</dbReference>
<dbReference type="PANTHER" id="PTHR11405:SF53">
    <property type="entry name" value="CARBAMOYL-PHOSPHATE SYNTHASE [AMMONIA], MITOCHONDRIAL"/>
    <property type="match status" value="1"/>
</dbReference>
<dbReference type="PANTHER" id="PTHR11405">
    <property type="entry name" value="CARBAMOYLTRANSFERASE FAMILY MEMBER"/>
    <property type="match status" value="1"/>
</dbReference>
<dbReference type="Pfam" id="PF02786">
    <property type="entry name" value="CPSase_L_D2"/>
    <property type="match status" value="2"/>
</dbReference>
<dbReference type="Pfam" id="PF02787">
    <property type="entry name" value="CPSase_L_D3"/>
    <property type="match status" value="1"/>
</dbReference>
<dbReference type="PRINTS" id="PR00098">
    <property type="entry name" value="CPSASE"/>
</dbReference>
<dbReference type="SMART" id="SM01096">
    <property type="entry name" value="CPSase_L_D3"/>
    <property type="match status" value="1"/>
</dbReference>
<dbReference type="SUPFAM" id="SSF48108">
    <property type="entry name" value="Carbamoyl phosphate synthetase, large subunit connection domain"/>
    <property type="match status" value="1"/>
</dbReference>
<dbReference type="SUPFAM" id="SSF56059">
    <property type="entry name" value="Glutathione synthetase ATP-binding domain-like"/>
    <property type="match status" value="2"/>
</dbReference>
<dbReference type="SUPFAM" id="SSF52440">
    <property type="entry name" value="PreATP-grasp domain"/>
    <property type="match status" value="2"/>
</dbReference>
<dbReference type="PROSITE" id="PS50975">
    <property type="entry name" value="ATP_GRASP"/>
    <property type="match status" value="2"/>
</dbReference>
<dbReference type="PROSITE" id="PS00866">
    <property type="entry name" value="CPSASE_1"/>
    <property type="match status" value="1"/>
</dbReference>
<dbReference type="PROSITE" id="PS51855">
    <property type="entry name" value="MGS"/>
    <property type="match status" value="1"/>
</dbReference>
<sequence length="1073" mass="119163">MPRRIDVRKVLMLGSGAIKIAEAAEFDYSGSQALKALREEGIETVLVNPNVATIQTSYKLADHVYLGPLQPWFVEKVIERERPDAILLGFGGQTALSLGVELHRRGILSRYGIRVLGTPIEGIEKALSRGKFRETMMKAGLPVPPSTPATSVEEALRAANEIGYPVIVRVSFNLGGGGSLVAWSREELERWLVRAFAFSGTGEVLVEKYLHYWKEIEYEVVRDQYGNMVAVACLENADPMGVHTGESVVIAPCQTLTDQEYQLLREASLRVAEAIGLVGEGNVQLALNPRDSWEYYVIETNPRMSRSSALASKATGYPLAYIAAKLALGYRLDELLNRVTERTCACFEPSLDYVVVKVPRWDLEKFEGVEKSIGSEMKSIGEVMAIGRNFAEALQKAIRMLDIGEPGVVAGPRYEEPESLEEVLGKLRRREPYWPIWAAKAFRLGASVEQVYEATGVDPYFLSQIREIVEVAEKLRRTKPWSSEFLDLLAEAKRLGFSDEQVALLTGTTVEKVEKARRSIGLDRPRVRQIDTLAAEWPAATNYLYMSYNAYEDDEPITTGRPRLIVLGAGVFRIGVSVEFDWGVVSFADEARRLGYEVVIVNYNPETVSTDWDISDKLYFEELTLERVIDIYWFEKPVGVIAFLGGQIANNLAKPLEERGVRLLGTPGRSVDRAENRAWFSQLLEELGIKQPSWTAASSIEEVLKFAESVGYPVLVRPSYVLSGSAMKIAWSPEELKSYIEQAARVSPRYPVVVSKFLEDAVEAEIDAVGDSRRTVGTVIEHVEPGGVHSGDSTMVIPWFSLPETAVREMIRIAETLNEVLEIKGPFNIQFLVKDGSVYVVELNLRASRSMPFTSKVTGYNLMRAAAEAALRGRISYGFNGADGFKLLRPTGWWGVKSPQPSWQRLRGAYPGLGPEMRSTGEVAALGRTLHEALLKSWLSVQGNRIPPAGSIVLIYTPTGRGSSDLSQAAKLMTEKGYTVYTIEGMEVDGAEPLPLEQALRLVRMGGVGLLMTTDYAPQRDYRVRRLAVDLGVPVVLDARLARMLAEAINRVGLENLEALELREYWGPNVEPF</sequence>
<reference key="1">
    <citation type="journal article" date="2007" name="Archaea">
        <title>The genome of Hyperthermus butylicus: a sulfur-reducing, peptide fermenting, neutrophilic Crenarchaeote growing up to 108 degrees C.</title>
        <authorList>
            <person name="Bruegger K."/>
            <person name="Chen L."/>
            <person name="Stark M."/>
            <person name="Zibat A."/>
            <person name="Redder P."/>
            <person name="Ruepp A."/>
            <person name="Awayez M."/>
            <person name="She Q."/>
            <person name="Garrett R.A."/>
            <person name="Klenk H.-P."/>
        </authorList>
    </citation>
    <scope>NUCLEOTIDE SEQUENCE [LARGE SCALE GENOMIC DNA]</scope>
    <source>
        <strain>DSM 5456 / JCM 9403 / PLM1-5</strain>
    </source>
</reference>
<accession>A2BJL3</accession>